<organism>
    <name type="scientific">Sus scrofa</name>
    <name type="common">Pig</name>
    <dbReference type="NCBI Taxonomy" id="9823"/>
    <lineage>
        <taxon>Eukaryota</taxon>
        <taxon>Metazoa</taxon>
        <taxon>Chordata</taxon>
        <taxon>Craniata</taxon>
        <taxon>Vertebrata</taxon>
        <taxon>Euteleostomi</taxon>
        <taxon>Mammalia</taxon>
        <taxon>Eutheria</taxon>
        <taxon>Laurasiatheria</taxon>
        <taxon>Artiodactyla</taxon>
        <taxon>Suina</taxon>
        <taxon>Suidae</taxon>
        <taxon>Sus</taxon>
    </lineage>
</organism>
<protein>
    <recommendedName>
        <fullName evidence="1">NPC intracellular cholesterol transporter 2</fullName>
    </recommendedName>
    <alternativeName>
        <fullName evidence="6">16 kDa secretory protein</fullName>
    </alternativeName>
    <alternativeName>
        <fullName>Epididymal secretory protein E1</fullName>
    </alternativeName>
    <alternativeName>
        <fullName>Niemann Pick type C2 protein homolog</fullName>
    </alternativeName>
</protein>
<feature type="signal peptide" evidence="5">
    <location>
        <begin position="1"/>
        <end position="19"/>
    </location>
</feature>
<feature type="chain" id="PRO_0000019858" description="NPC intracellular cholesterol transporter 2">
    <location>
        <begin position="20"/>
        <end position="149"/>
    </location>
</feature>
<feature type="modified residue" description="N6-acetyllysine" evidence="3">
    <location>
        <position position="116"/>
    </location>
</feature>
<feature type="glycosylation site" description="N-linked (GlcNAc...) asparagine" evidence="4">
    <location>
        <position position="58"/>
    </location>
</feature>
<feature type="disulfide bond" evidence="1">
    <location>
        <begin position="27"/>
        <end position="140"/>
    </location>
</feature>
<feature type="disulfide bond" evidence="1">
    <location>
        <begin position="42"/>
        <end position="47"/>
    </location>
</feature>
<feature type="disulfide bond" evidence="1">
    <location>
        <begin position="93"/>
        <end position="99"/>
    </location>
</feature>
<proteinExistence type="evidence at protein level"/>
<evidence type="ECO:0000250" key="1">
    <source>
        <dbReference type="UniProtKB" id="P61916"/>
    </source>
</evidence>
<evidence type="ECO:0000250" key="2">
    <source>
        <dbReference type="UniProtKB" id="P79345"/>
    </source>
</evidence>
<evidence type="ECO:0000250" key="3">
    <source>
        <dbReference type="UniProtKB" id="Q9Z0J0"/>
    </source>
</evidence>
<evidence type="ECO:0000255" key="4"/>
<evidence type="ECO:0000269" key="5">
    <source>
    </source>
</evidence>
<evidence type="ECO:0000303" key="6">
    <source>
    </source>
</evidence>
<evidence type="ECO:0000305" key="7"/>
<reference key="1">
    <citation type="journal article" date="1999" name="Biochim. Biophys. Acta">
        <title>A porcine homolog of the major secretory protein of human epididymis, HE1, specifically binds cholesterol.</title>
        <authorList>
            <person name="Okamura N."/>
            <person name="Kiuchi S."/>
            <person name="Tamba M."/>
            <person name="Kashima T."/>
            <person name="Hiramoto S."/>
            <person name="Baba T."/>
            <person name="Dacheux F."/>
            <person name="Dacheux J.-L."/>
            <person name="Sugita Y."/>
            <person name="Jin Y.-Z."/>
        </authorList>
    </citation>
    <scope>NUCLEOTIDE SEQUENCE [MRNA]</scope>
    <scope>PROTEIN SEQUENCE OF 20-39</scope>
    <scope>TISSUE SPECIFICITY</scope>
    <scope>SUBCELLULAR LOCATION</scope>
    <scope>GLYCOSYLATION</scope>
    <scope>FUNCTION</scope>
    <source>
        <tissue>Epididymis</tissue>
    </source>
</reference>
<keyword id="KW-0007">Acetylation</keyword>
<keyword id="KW-0153">Cholesterol metabolism</keyword>
<keyword id="KW-0903">Direct protein sequencing</keyword>
<keyword id="KW-1015">Disulfide bond</keyword>
<keyword id="KW-0256">Endoplasmic reticulum</keyword>
<keyword id="KW-0325">Glycoprotein</keyword>
<keyword id="KW-0443">Lipid metabolism</keyword>
<keyword id="KW-0445">Lipid transport</keyword>
<keyword id="KW-0458">Lysosome</keyword>
<keyword id="KW-1185">Reference proteome</keyword>
<keyword id="KW-0964">Secreted</keyword>
<keyword id="KW-0732">Signal</keyword>
<keyword id="KW-0753">Steroid metabolism</keyword>
<keyword id="KW-1207">Sterol metabolism</keyword>
<keyword id="KW-0813">Transport</keyword>
<name>NPC2_PIG</name>
<gene>
    <name evidence="1" type="primary">NPC2</name>
</gene>
<dbReference type="EMBL" id="U62253">
    <property type="protein sequence ID" value="AAD00096.1"/>
    <property type="molecule type" value="mRNA"/>
</dbReference>
<dbReference type="RefSeq" id="NP_999371.1">
    <property type="nucleotide sequence ID" value="NM_214206.1"/>
</dbReference>
<dbReference type="SMR" id="O97763"/>
<dbReference type="FunCoup" id="O97763">
    <property type="interactions" value="892"/>
</dbReference>
<dbReference type="STRING" id="9823.ENSSSCP00000073764"/>
<dbReference type="GlyCosmos" id="O97763">
    <property type="glycosylation" value="1 site, No reported glycans"/>
</dbReference>
<dbReference type="GlyGen" id="O97763">
    <property type="glycosylation" value="2 sites"/>
</dbReference>
<dbReference type="PaxDb" id="9823-ENSSSCP00000002564"/>
<dbReference type="PeptideAtlas" id="O97763"/>
<dbReference type="Ensembl" id="ENSSSCT00000002630.5">
    <property type="protein sequence ID" value="ENSSSCP00000002564.2"/>
    <property type="gene ID" value="ENSSSCG00000002366.5"/>
</dbReference>
<dbReference type="Ensembl" id="ENSSSCT00015107137.1">
    <property type="protein sequence ID" value="ENSSSCP00015045201.1"/>
    <property type="gene ID" value="ENSSSCG00015079034.1"/>
</dbReference>
<dbReference type="Ensembl" id="ENSSSCT00025015410.1">
    <property type="protein sequence ID" value="ENSSSCP00025006069.1"/>
    <property type="gene ID" value="ENSSSCG00025011176.1"/>
</dbReference>
<dbReference type="Ensembl" id="ENSSSCT00030043905.1">
    <property type="protein sequence ID" value="ENSSSCP00030019816.1"/>
    <property type="gene ID" value="ENSSSCG00030031683.1"/>
</dbReference>
<dbReference type="Ensembl" id="ENSSSCT00035014997.1">
    <property type="protein sequence ID" value="ENSSSCP00035005118.1"/>
    <property type="gene ID" value="ENSSSCG00035011913.1"/>
</dbReference>
<dbReference type="Ensembl" id="ENSSSCT00040079466.1">
    <property type="protein sequence ID" value="ENSSSCP00040034313.1"/>
    <property type="gene ID" value="ENSSSCG00040057371.1"/>
</dbReference>
<dbReference type="Ensembl" id="ENSSSCT00045058199.1">
    <property type="protein sequence ID" value="ENSSSCP00045040685.1"/>
    <property type="gene ID" value="ENSSSCG00045034006.1"/>
</dbReference>
<dbReference type="Ensembl" id="ENSSSCT00050094206.1">
    <property type="protein sequence ID" value="ENSSSCP00050040623.1"/>
    <property type="gene ID" value="ENSSSCG00050069000.1"/>
</dbReference>
<dbReference type="Ensembl" id="ENSSSCT00055001194.1">
    <property type="protein sequence ID" value="ENSSSCP00055000871.1"/>
    <property type="gene ID" value="ENSSSCG00055000690.1"/>
</dbReference>
<dbReference type="Ensembl" id="ENSSSCT00060009877.1">
    <property type="protein sequence ID" value="ENSSSCP00060003610.1"/>
    <property type="gene ID" value="ENSSSCG00060007744.1"/>
</dbReference>
<dbReference type="Ensembl" id="ENSSSCT00065033318.1">
    <property type="protein sequence ID" value="ENSSSCP00065013770.1"/>
    <property type="gene ID" value="ENSSSCG00065024849.1"/>
</dbReference>
<dbReference type="Ensembl" id="ENSSSCT00070018316.1">
    <property type="protein sequence ID" value="ENSSSCP00070015212.1"/>
    <property type="gene ID" value="ENSSSCG00070009444.1"/>
</dbReference>
<dbReference type="Ensembl" id="ENSSSCT00085035778">
    <property type="protein sequence ID" value="ENSSSCP00085024558"/>
    <property type="gene ID" value="ENSSSCG00085018866"/>
</dbReference>
<dbReference type="Ensembl" id="ENSSSCT00090039699">
    <property type="protein sequence ID" value="ENSSSCP00090024722"/>
    <property type="gene ID" value="ENSSSCG00090022354"/>
</dbReference>
<dbReference type="Ensembl" id="ENSSSCT00105069727">
    <property type="protein sequence ID" value="ENSSSCP00105049378"/>
    <property type="gene ID" value="ENSSSCG00105036577"/>
</dbReference>
<dbReference type="Ensembl" id="ENSSSCT00110059718">
    <property type="protein sequence ID" value="ENSSSCP00110041677"/>
    <property type="gene ID" value="ENSSSCG00110031279"/>
</dbReference>
<dbReference type="Ensembl" id="ENSSSCT00115016005">
    <property type="protein sequence ID" value="ENSSSCP00115015101"/>
    <property type="gene ID" value="ENSSSCG00115009240"/>
</dbReference>
<dbReference type="Ensembl" id="ENSSSCT00130053423">
    <property type="protein sequence ID" value="ENSSSCP00130038093"/>
    <property type="gene ID" value="ENSSSCG00130027418"/>
</dbReference>
<dbReference type="GeneID" id="397410"/>
<dbReference type="KEGG" id="ssc:397410"/>
<dbReference type="CTD" id="10577"/>
<dbReference type="VGNC" id="VGNC:90843">
    <property type="gene designation" value="NPC2"/>
</dbReference>
<dbReference type="eggNOG" id="KOG4063">
    <property type="taxonomic scope" value="Eukaryota"/>
</dbReference>
<dbReference type="GeneTree" id="ENSGT00390000006223"/>
<dbReference type="HOGENOM" id="CLU_109192_1_0_1"/>
<dbReference type="InParanoid" id="O97763"/>
<dbReference type="OMA" id="QNLFCWE"/>
<dbReference type="OrthoDB" id="6489092at2759"/>
<dbReference type="TreeFam" id="TF317963"/>
<dbReference type="Reactome" id="R-SSC-6798695">
    <property type="pathway name" value="Neutrophil degranulation"/>
</dbReference>
<dbReference type="Reactome" id="R-SSC-8964038">
    <property type="pathway name" value="LDL clearance"/>
</dbReference>
<dbReference type="Proteomes" id="UP000008227">
    <property type="component" value="Chromosome 7"/>
</dbReference>
<dbReference type="Proteomes" id="UP000314985">
    <property type="component" value="Chromosome 7"/>
</dbReference>
<dbReference type="Proteomes" id="UP000694570">
    <property type="component" value="Unplaced"/>
</dbReference>
<dbReference type="Proteomes" id="UP000694571">
    <property type="component" value="Unplaced"/>
</dbReference>
<dbReference type="Proteomes" id="UP000694720">
    <property type="component" value="Unplaced"/>
</dbReference>
<dbReference type="Proteomes" id="UP000694722">
    <property type="component" value="Unplaced"/>
</dbReference>
<dbReference type="Proteomes" id="UP000694723">
    <property type="component" value="Unplaced"/>
</dbReference>
<dbReference type="Proteomes" id="UP000694724">
    <property type="component" value="Unplaced"/>
</dbReference>
<dbReference type="Proteomes" id="UP000694725">
    <property type="component" value="Unplaced"/>
</dbReference>
<dbReference type="Proteomes" id="UP000694726">
    <property type="component" value="Unplaced"/>
</dbReference>
<dbReference type="Proteomes" id="UP000694727">
    <property type="component" value="Unplaced"/>
</dbReference>
<dbReference type="Proteomes" id="UP000694728">
    <property type="component" value="Unplaced"/>
</dbReference>
<dbReference type="Bgee" id="ENSSSCG00000002366">
    <property type="expression patterns" value="Expressed in epididymis and 44 other cell types or tissues"/>
</dbReference>
<dbReference type="ExpressionAtlas" id="O97763">
    <property type="expression patterns" value="baseline and differential"/>
</dbReference>
<dbReference type="GO" id="GO:0005783">
    <property type="term" value="C:endoplasmic reticulum"/>
    <property type="evidence" value="ECO:0007669"/>
    <property type="project" value="UniProtKB-SubCell"/>
</dbReference>
<dbReference type="GO" id="GO:0005615">
    <property type="term" value="C:extracellular space"/>
    <property type="evidence" value="ECO:0000314"/>
    <property type="project" value="UniProtKB"/>
</dbReference>
<dbReference type="GO" id="GO:0005764">
    <property type="term" value="C:lysosome"/>
    <property type="evidence" value="ECO:0007669"/>
    <property type="project" value="UniProtKB-SubCell"/>
</dbReference>
<dbReference type="GO" id="GO:0015485">
    <property type="term" value="F:cholesterol binding"/>
    <property type="evidence" value="ECO:0000314"/>
    <property type="project" value="UniProtKB"/>
</dbReference>
<dbReference type="GO" id="GO:0033344">
    <property type="term" value="P:cholesterol efflux"/>
    <property type="evidence" value="ECO:0000250"/>
    <property type="project" value="UniProtKB"/>
</dbReference>
<dbReference type="GO" id="GO:0008203">
    <property type="term" value="P:cholesterol metabolic process"/>
    <property type="evidence" value="ECO:0007669"/>
    <property type="project" value="UniProtKB-KW"/>
</dbReference>
<dbReference type="GO" id="GO:0030301">
    <property type="term" value="P:cholesterol transport"/>
    <property type="evidence" value="ECO:0000250"/>
    <property type="project" value="UniProtKB"/>
</dbReference>
<dbReference type="GO" id="GO:0032367">
    <property type="term" value="P:intracellular cholesterol transport"/>
    <property type="evidence" value="ECO:0000250"/>
    <property type="project" value="UniProtKB"/>
</dbReference>
<dbReference type="CDD" id="cd00916">
    <property type="entry name" value="Npc2_like"/>
    <property type="match status" value="1"/>
</dbReference>
<dbReference type="FunFam" id="2.60.40.770:FF:000001">
    <property type="entry name" value="NPC intracellular cholesterol transporter 2"/>
    <property type="match status" value="1"/>
</dbReference>
<dbReference type="Gene3D" id="2.60.40.770">
    <property type="match status" value="1"/>
</dbReference>
<dbReference type="InterPro" id="IPR014756">
    <property type="entry name" value="Ig_E-set"/>
</dbReference>
<dbReference type="InterPro" id="IPR003172">
    <property type="entry name" value="ML_dom"/>
</dbReference>
<dbReference type="InterPro" id="IPR033916">
    <property type="entry name" value="ML_Npc2-like"/>
</dbReference>
<dbReference type="InterPro" id="IPR039670">
    <property type="entry name" value="NPC2-like"/>
</dbReference>
<dbReference type="PANTHER" id="PTHR11306">
    <property type="entry name" value="NIEMANN PICK TYPE C2 PROTEIN NPC2-RELATED"/>
    <property type="match status" value="1"/>
</dbReference>
<dbReference type="PANTHER" id="PTHR11306:SF68">
    <property type="entry name" value="NPC INTRACELLULAR CHOLESTEROL TRANSPORTER 2"/>
    <property type="match status" value="1"/>
</dbReference>
<dbReference type="Pfam" id="PF02221">
    <property type="entry name" value="E1_DerP2_DerF2"/>
    <property type="match status" value="1"/>
</dbReference>
<dbReference type="SMART" id="SM00737">
    <property type="entry name" value="ML"/>
    <property type="match status" value="1"/>
</dbReference>
<dbReference type="SUPFAM" id="SSF81296">
    <property type="entry name" value="E set domains"/>
    <property type="match status" value="1"/>
</dbReference>
<comment type="function">
    <text evidence="1 3 5">Intracellular cholesterol transporter which acts in concert with NPC1 and plays an important role in the egress of cholesterol from the lysosomal compartment. Unesterified cholesterol that has been released from LDLs in the lumen of the late endosomes/lysosomes is transferred by NPC2 to the cholesterol-binding pocket in the N-terminal domain of NPC1. May bind and mobilize cholesterol that is associated with membranes (By similarity). NPC2 binds cholesterol with a 1:1 stoichiometry (PubMed:10366780). Can bind a variety of sterols, including lathosterol, desmosterol and the plant sterols stigmasterol and beta-sitosterol (By similarity). The secreted form of NCP2 regulates biliary cholesterol secretion via stimulation of ABCG5/ABCG8-mediated cholesterol transport (By similarity).</text>
</comment>
<comment type="catalytic activity">
    <reaction evidence="2">
        <text>cholesterol(in) = cholesterol(out)</text>
        <dbReference type="Rhea" id="RHEA:39747"/>
        <dbReference type="ChEBI" id="CHEBI:16113"/>
    </reaction>
</comment>
<comment type="subunit">
    <text evidence="1">Interacts with NPC1 (via the second lumenal domain) in a cholestrol-dependent manner. Interacts with NUS1/NgBR, the interaction stabilizes NCP2 and regulates cholesterol trafficking. Interacts with DHDDS. Interacts with NEDD4L (via C2 domain). Interacts with NPC1L1.</text>
</comment>
<comment type="subcellular location">
    <subcellularLocation>
        <location evidence="5">Secreted</location>
    </subcellularLocation>
    <subcellularLocation>
        <location evidence="1">Endoplasmic reticulum</location>
    </subcellularLocation>
    <subcellularLocation>
        <location evidence="1">Lysosome</location>
    </subcellularLocation>
    <text evidence="1">Interaction with cell-surface M6PR mediates endocytosis and targeting to lysosomes.</text>
</comment>
<comment type="tissue specificity">
    <text evidence="5">Found in the fluid from the distal caput to cauda epididymis, not detected in the rete testis and the proximal and middle caput epididymal fluids (at protein level).</text>
</comment>
<comment type="domain">
    <text evidence="2">Binds cholesterol in a hydrophobic pocket; there are no hydrogen bonds between the sterol and the protein.</text>
</comment>
<comment type="PTM">
    <text evidence="5">N-glycosylated. Found in the epididymal fluid as a 19 kDa glycoprotein that is processed during its passage through the epididymis into a 16 kDa protein.</text>
</comment>
<comment type="similarity">
    <text evidence="7">Belongs to the NPC2 family.</text>
</comment>
<accession>O97763</accession>
<sequence>MHFLAAAFLLLTLSASALAEPVHFRDCGSGVGVIKEVNVNPCPTQPCQLHKGQSYSVNVTFTSNTQSKGSKAVVHGIVMGVPIPFPIPDPDGCKSGINCPIQKDQTYSYLNKLPVKAEYPSIKLVVEWKLQDDNDQCLFCWQIPVQIES</sequence>